<evidence type="ECO:0000250" key="1"/>
<evidence type="ECO:0000250" key="2">
    <source>
        <dbReference type="UniProtKB" id="Q25619"/>
    </source>
</evidence>
<evidence type="ECO:0000255" key="3"/>
<evidence type="ECO:0000269" key="4">
    <source>
    </source>
</evidence>
<evidence type="ECO:0000269" key="5">
    <source>
    </source>
</evidence>
<evidence type="ECO:0000269" key="6">
    <source>
    </source>
</evidence>
<evidence type="ECO:0000305" key="7"/>
<evidence type="ECO:0000312" key="8">
    <source>
        <dbReference type="EMBL" id="AAM28244.1"/>
    </source>
</evidence>
<comment type="function">
    <text evidence="1">Binds retinol and different fatty acids.</text>
</comment>
<comment type="subcellular location">
    <subcellularLocation>
        <location evidence="4 6">Secreted</location>
    </subcellularLocation>
</comment>
<comment type="developmental stage">
    <text evidence="4 6">Expressed in larvae and adults.</text>
</comment>
<comment type="PTM">
    <text evidence="4 5">N-glycosylated.</text>
</comment>
<comment type="similarity">
    <text evidence="2 7">Belongs to the fatty-acid and retinol-binding protein (FARBP) family.</text>
</comment>
<dbReference type="EMBL" id="AY099071">
    <property type="protein sequence ID" value="AAM28244.1"/>
    <property type="molecule type" value="mRNA"/>
</dbReference>
<dbReference type="SMR" id="Q8MZJ8"/>
<dbReference type="GlyCosmos" id="Q8MZJ8">
    <property type="glycosylation" value="3 sites, No reported glycans"/>
</dbReference>
<dbReference type="GO" id="GO:0005576">
    <property type="term" value="C:extracellular region"/>
    <property type="evidence" value="ECO:0000314"/>
    <property type="project" value="UniProtKB"/>
</dbReference>
<dbReference type="GO" id="GO:0005504">
    <property type="term" value="F:fatty acid binding"/>
    <property type="evidence" value="ECO:0000250"/>
    <property type="project" value="UniProtKB"/>
</dbReference>
<dbReference type="GO" id="GO:0016918">
    <property type="term" value="F:retinal binding"/>
    <property type="evidence" value="ECO:0007669"/>
    <property type="project" value="UniProtKB-KW"/>
</dbReference>
<dbReference type="GO" id="GO:0019841">
    <property type="term" value="F:retinol binding"/>
    <property type="evidence" value="ECO:0000250"/>
    <property type="project" value="UniProtKB"/>
</dbReference>
<dbReference type="FunFam" id="1.20.120.1100:FF:000001">
    <property type="entry name" value="Fatty-acid and retinol-binding protein 1"/>
    <property type="match status" value="1"/>
</dbReference>
<dbReference type="Gene3D" id="1.20.120.1100">
    <property type="match status" value="1"/>
</dbReference>
<dbReference type="InterPro" id="IPR008632">
    <property type="entry name" value="Gp-FAR-1"/>
</dbReference>
<dbReference type="PANTHER" id="PTHR31418">
    <property type="entry name" value="FATTY-ACID AND RETINOL-BINDING PROTEIN 1"/>
    <property type="match status" value="1"/>
</dbReference>
<dbReference type="PANTHER" id="PTHR31418:SF7">
    <property type="entry name" value="FATTY-ACID AND RETINOL-BINDING PROTEIN 1"/>
    <property type="match status" value="1"/>
</dbReference>
<dbReference type="Pfam" id="PF05823">
    <property type="entry name" value="Gp-FAR-1"/>
    <property type="match status" value="1"/>
</dbReference>
<keyword id="KW-0175">Coiled coil</keyword>
<keyword id="KW-0325">Glycoprotein</keyword>
<keyword id="KW-0446">Lipid-binding</keyword>
<keyword id="KW-0683">Retinol-binding</keyword>
<keyword id="KW-0964">Secreted</keyword>
<keyword id="KW-0732">Signal</keyword>
<keyword id="KW-0845">Vitamin A</keyword>
<organism>
    <name type="scientific">Acanthocheilonema viteae</name>
    <name type="common">Filarial nematode worm</name>
    <name type="synonym">Dipetalonema viteae</name>
    <dbReference type="NCBI Taxonomy" id="6277"/>
    <lineage>
        <taxon>Eukaryota</taxon>
        <taxon>Metazoa</taxon>
        <taxon>Ecdysozoa</taxon>
        <taxon>Nematoda</taxon>
        <taxon>Chromadorea</taxon>
        <taxon>Rhabditida</taxon>
        <taxon>Spirurina</taxon>
        <taxon>Spiruromorpha</taxon>
        <taxon>Filarioidea</taxon>
        <taxon>Onchocercidae</taxon>
        <taxon>Acanthocheilonema</taxon>
    </lineage>
</organism>
<protein>
    <recommendedName>
        <fullName>Fatty-acid and retinol-binding protein 1</fullName>
    </recommendedName>
    <alternativeName>
        <fullName>Av-FAR-1</fullName>
    </alternativeName>
    <alternativeName>
        <fullName>Av20</fullName>
    </alternativeName>
</protein>
<sequence length="178" mass="20518">MYHQLILMALIGVIMANVVPFSMSNIPEEYKEFIPEEVKNFYKNLTQEDRQILRELASKHATFTNEDAALEALKNKSDKLYQKAVELRNFVKAKIDSLKPDAKAFVDEIIAKVRSLRPEDGQKLDVEKLKQAARDIIAKYEALNEETKEELKAPFPNTTKIITNEKFTRIANSFLQKN</sequence>
<proteinExistence type="evidence at protein level"/>
<accession>Q8MZJ8</accession>
<gene>
    <name evidence="8" type="primary">far-1</name>
</gene>
<name>FAR1_ACAVI</name>
<feature type="signal peptide" evidence="3">
    <location>
        <begin position="1"/>
        <end position="16"/>
    </location>
</feature>
<feature type="chain" id="PRO_0000008757" description="Fatty-acid and retinol-binding protein 1" evidence="3">
    <location>
        <begin position="17"/>
        <end position="178"/>
    </location>
</feature>
<feature type="coiled-coil region" evidence="3">
    <location>
        <begin position="67"/>
        <end position="89"/>
    </location>
</feature>
<feature type="coiled-coil region" evidence="3">
    <location>
        <begin position="123"/>
        <end position="153"/>
    </location>
</feature>
<feature type="glycosylation site" description="N-linked (GlcNAc...) asparagine" evidence="3">
    <location>
        <position position="44"/>
    </location>
</feature>
<feature type="glycosylation site" description="N-linked (GlcNAc...) asparagine" evidence="3">
    <location>
        <position position="75"/>
    </location>
</feature>
<feature type="glycosylation site" description="N-linked (GlcNAc...) asparagine" evidence="3">
    <location>
        <position position="157"/>
    </location>
</feature>
<feature type="sequence conflict" description="In Ref. 2." evidence="7" ref="2">
    <original>S</original>
    <variation>P</variation>
    <location>
        <position position="22"/>
    </location>
</feature>
<feature type="sequence conflict" description="In Ref. 2." evidence="7" ref="2">
    <original>I</original>
    <variation>M</variation>
    <location>
        <position position="34"/>
    </location>
</feature>
<feature type="sequence conflict" description="In Ref. 2." evidence="7" ref="2">
    <original>TQEDR</original>
    <variation>SIFLC</variation>
    <location>
        <begin position="46"/>
        <end position="50"/>
    </location>
</feature>
<feature type="sequence conflict" description="In Ref. 2." evidence="7" ref="2">
    <original>F</original>
    <variation>L</variation>
    <location>
        <position position="90"/>
    </location>
</feature>
<reference evidence="7 8" key="1">
    <citation type="journal article" date="2002" name="Mol. Biochem. Parasitol.">
        <title>The FAR proteins of filarial nematodes: secretion, glycosylation and lipid binding characteristics.</title>
        <authorList>
            <person name="Garofalo A."/>
            <person name="Klager S.L."/>
            <person name="Rowlinson M.C."/>
            <person name="Nirmalan N."/>
            <person name="Klion A.D."/>
            <person name="Allen J.E."/>
            <person name="Kennedy M.W."/>
            <person name="Bradley J.E."/>
        </authorList>
    </citation>
    <scope>NUCLEOTIDE SEQUENCE [MRNA]</scope>
    <scope>SUBCELLULAR LOCATION</scope>
    <scope>DEVELOPMENTAL STAGE</scope>
    <scope>GLYCOSYLATION</scope>
</reference>
<reference evidence="7" key="2">
    <citation type="journal article" date="1999" name="Infect. Immun.">
        <title>Comparative analysis of glycosylated and nonglycosylated filarial homologues of the 20-kilodalton retinol binding protein from Onchocerca volvulus (Ov20).</title>
        <authorList>
            <person name="Nirmalan N."/>
            <person name="Cordeiro N.J.V."/>
            <person name="Klager S.L."/>
            <person name="Bradley J.E."/>
            <person name="Allen J.E."/>
        </authorList>
    </citation>
    <scope>NUCLEOTIDE SEQUENCE [MRNA] OF 16-178</scope>
</reference>
<reference evidence="7" key="3">
    <citation type="journal article" date="1995" name="Mol. Biochem. Parasitol.">
        <title>Characterisation of an immunodominant glycoprotein antigen of Onchocerca volvulus with homologues in other filarial nematodes and Caenorhabditis elegans.</title>
        <authorList>
            <person name="Tree T.I.M."/>
            <person name="Gillespie A.J."/>
            <person name="Shepley K.J."/>
            <person name="Blaxter M.L."/>
            <person name="Tuan R.S."/>
            <person name="Bradley J.E."/>
        </authorList>
    </citation>
    <scope>GLYCOSYLATION</scope>
</reference>
<reference evidence="7" key="4">
    <citation type="journal article" date="1996" name="Parasite Immunol.">
        <title>Characterization of a secreted antigen of Onchocerca volvulus with host-protective potential.</title>
        <authorList>
            <person name="Jenkins R.E."/>
            <person name="Taylor M.J."/>
            <person name="Gilvary N."/>
            <person name="Bianco A.E."/>
        </authorList>
    </citation>
    <scope>SUBCELLULAR LOCATION</scope>
    <scope>DEVELOPMENTAL STAGE</scope>
</reference>